<comment type="subunit">
    <text evidence="8 12 13">Dimer of an alpha chain and a beta chain linked by a disulfide bond. Interacts (via beta chain) with MST1R (via SEMA domain).</text>
</comment>
<comment type="interaction">
    <interactant intactId="EBI-6929133">
        <id>P26927</id>
    </interactant>
    <interactant intactId="EBI-2637518">
        <id>Q04912</id>
        <label>MST1R</label>
    </interactant>
    <organismsDiffer>false</organismsDiffer>
    <experiments>5</experiments>
</comment>
<comment type="interaction">
    <interactant intactId="EBI-6929133">
        <id>P26927</id>
    </interactant>
    <interactant intactId="EBI-2854842">
        <id>Q8WV19</id>
        <label>SFT2D1</label>
    </interactant>
    <organismsDiffer>false</organismsDiffer>
    <experiments>3</experiments>
</comment>
<comment type="interaction">
    <interactant intactId="EBI-6929133">
        <id>P26927</id>
    </interactant>
    <interactant intactId="EBI-306838">
        <id>Q15831</id>
        <label>STK11</label>
    </interactant>
    <organismsDiffer>false</organismsDiffer>
    <experiments>2</experiments>
</comment>
<comment type="subcellular location">
    <subcellularLocation>
        <location>Secreted</location>
    </subcellularLocation>
</comment>
<comment type="PTM">
    <text>Cleaved after Arg-483, probably by HPN/Hepsin, to yield the active form consisting of two disulfide-linked chains.</text>
</comment>
<comment type="disease">
    <text evidence="9 11">MST1 variant Cys-689 may be associated with inflammatory bowel disease (IBD), a chronic, relapsing inflammation of the gastrointestinal tract with a complex etiology. It is unsure whether Cys-689 itself or a variation in linkage disequilibrium with Cys-689 is responsible for the association with IBD.</text>
</comment>
<comment type="similarity">
    <text evidence="4">Belongs to the peptidase S1 family. Plasminogen subfamily.</text>
</comment>
<comment type="caution">
    <text evidence="14">Although related to peptidase S1 family, the active site residues characteristic of serine proteases appear to be absent from this protein, which may therefore lack protease activity.</text>
</comment>
<accession>P26927</accession>
<accession>A6NLA3</accession>
<accession>A8MSX3</accession>
<accession>Q13350</accession>
<accession>Q14870</accession>
<accession>Q6GTN4</accession>
<proteinExistence type="evidence at protein level"/>
<feature type="signal peptide" evidence="2">
    <location>
        <begin position="1"/>
        <end position="18"/>
    </location>
</feature>
<feature type="chain" id="PRO_0000028085" description="Hepatocyte growth factor-like protein">
    <location>
        <begin position="19"/>
        <end position="711"/>
    </location>
</feature>
<feature type="chain" id="PRO_0000028086" description="Hepatocyte growth factor-like protein alpha chain" evidence="14">
    <location>
        <begin position="19"/>
        <end position="483"/>
    </location>
</feature>
<feature type="chain" id="PRO_0000028087" description="Hepatocyte growth factor-like protein beta chain" evidence="14">
    <location>
        <begin position="484"/>
        <end position="711"/>
    </location>
</feature>
<feature type="domain" description="PAN" evidence="5">
    <location>
        <begin position="21"/>
        <end position="105"/>
    </location>
</feature>
<feature type="domain" description="Kringle 1" evidence="3">
    <location>
        <begin position="110"/>
        <end position="186"/>
    </location>
</feature>
<feature type="domain" description="Kringle 2" evidence="3">
    <location>
        <begin position="191"/>
        <end position="268"/>
    </location>
</feature>
<feature type="domain" description="Kringle 3" evidence="3">
    <location>
        <begin position="283"/>
        <end position="361"/>
    </location>
</feature>
<feature type="domain" description="Kringle 4" evidence="3">
    <location>
        <begin position="370"/>
        <end position="448"/>
    </location>
</feature>
<feature type="domain" description="Peptidase S1" evidence="4">
    <location>
        <begin position="484"/>
        <end position="709"/>
    </location>
</feature>
<feature type="glycosylation site" description="N-linked (GlcNAc...) asparagine" evidence="2">
    <location>
        <position position="72"/>
    </location>
</feature>
<feature type="glycosylation site" description="N-linked (GlcNAc...) asparagine" evidence="6">
    <location>
        <position position="296"/>
    </location>
</feature>
<feature type="glycosylation site" description="N-linked (GlcNAc...) asparagine" evidence="10">
    <location>
        <position position="615"/>
    </location>
</feature>
<feature type="disulfide bond" evidence="1">
    <location>
        <begin position="56"/>
        <end position="78"/>
    </location>
</feature>
<feature type="disulfide bond" evidence="1">
    <location>
        <begin position="60"/>
        <end position="66"/>
    </location>
</feature>
<feature type="disulfide bond" evidence="1">
    <location>
        <begin position="110"/>
        <end position="186"/>
    </location>
</feature>
<feature type="disulfide bond" evidence="1">
    <location>
        <begin position="131"/>
        <end position="169"/>
    </location>
</feature>
<feature type="disulfide bond" evidence="1">
    <location>
        <begin position="157"/>
        <end position="181"/>
    </location>
</feature>
<feature type="disulfide bond" evidence="1">
    <location>
        <begin position="191"/>
        <end position="268"/>
    </location>
</feature>
<feature type="disulfide bond" evidence="1">
    <location>
        <begin position="194"/>
        <end position="324"/>
    </location>
</feature>
<feature type="disulfide bond" evidence="1">
    <location>
        <begin position="212"/>
        <end position="251"/>
    </location>
</feature>
<feature type="disulfide bond" evidence="1">
    <location>
        <begin position="240"/>
        <end position="263"/>
    </location>
</feature>
<feature type="disulfide bond" evidence="1">
    <location>
        <begin position="283"/>
        <end position="361"/>
    </location>
</feature>
<feature type="disulfide bond" evidence="1">
    <location>
        <begin position="304"/>
        <end position="343"/>
    </location>
</feature>
<feature type="disulfide bond" evidence="1">
    <location>
        <begin position="332"/>
        <end position="355"/>
    </location>
</feature>
<feature type="disulfide bond" evidence="1">
    <location>
        <begin position="370"/>
        <end position="448"/>
    </location>
</feature>
<feature type="disulfide bond" evidence="1">
    <location>
        <begin position="391"/>
        <end position="431"/>
    </location>
</feature>
<feature type="disulfide bond" evidence="1">
    <location>
        <begin position="419"/>
        <end position="443"/>
    </location>
</feature>
<feature type="disulfide bond" description="Interchain (between alpha and beta chains)">
    <location>
        <begin position="468"/>
        <end position="588"/>
    </location>
</feature>
<feature type="disulfide bond" evidence="1">
    <location>
        <begin position="507"/>
        <end position="523"/>
    </location>
</feature>
<feature type="disulfide bond" evidence="1">
    <location>
        <begin position="602"/>
        <end position="667"/>
    </location>
</feature>
<feature type="disulfide bond" evidence="1">
    <location>
        <begin position="632"/>
        <end position="646"/>
    </location>
</feature>
<feature type="disulfide bond" evidence="1">
    <location>
        <begin position="657"/>
        <end position="685"/>
    </location>
</feature>
<feature type="sequence variant" id="VAR_006631" evidence="7">
    <original>C</original>
    <variation>Y</variation>
    <location>
        <position position="13"/>
    </location>
</feature>
<feature type="sequence variant" id="VAR_006632">
    <original>C</original>
    <variation>F</variation>
    <location>
        <position position="212"/>
    </location>
</feature>
<feature type="sequence variant" id="VAR_059787" description="In dbSNP:rs6791037.">
    <original>S</original>
    <variation>G</variation>
    <location>
        <position position="551"/>
    </location>
</feature>
<feature type="sequence variant" id="VAR_070224" description="May be associated with inflammatory bowel disease; results in reduced binding affinity to MST1R; dbSNP:rs3197999." evidence="9 11 12">
    <original>R</original>
    <variation>C</variation>
    <location>
        <position position="689"/>
    </location>
</feature>
<feature type="sequence conflict" description="In Ref. 5; AA sequence." evidence="14" ref="5">
    <original>R</original>
    <variation>G</variation>
    <location>
        <position position="292"/>
    </location>
</feature>
<feature type="sequence conflict" description="In Ref. 5; AA sequence." evidence="14" ref="5">
    <original>C</original>
    <variation>E</variation>
    <location>
        <position position="304"/>
    </location>
</feature>
<feature type="sequence conflict" description="In Ref. 5; AA sequence." evidence="14" ref="5">
    <original>R</original>
    <variation>E</variation>
    <location>
        <position position="306"/>
    </location>
</feature>
<feature type="sequence conflict" description="In Ref. 5; AA sequence." evidence="14" ref="5">
    <location>
        <position position="550"/>
    </location>
</feature>
<feature type="sequence conflict" description="In Ref. 5; AA sequence." evidence="14" ref="5">
    <original>W</original>
    <variation>E</variation>
    <location>
        <position position="593"/>
    </location>
</feature>
<feature type="sequence conflict" description="In Ref. 2; AAA59872." evidence="14" ref="2">
    <original>L</original>
    <variation>F</variation>
    <location>
        <position position="623"/>
    </location>
</feature>
<feature type="turn" evidence="16">
    <location>
        <begin position="475"/>
        <end position="479"/>
    </location>
</feature>
<feature type="strand" evidence="15">
    <location>
        <begin position="495"/>
        <end position="499"/>
    </location>
</feature>
<feature type="strand" evidence="15">
    <location>
        <begin position="505"/>
        <end position="513"/>
    </location>
</feature>
<feature type="strand" evidence="15">
    <location>
        <begin position="516"/>
        <end position="520"/>
    </location>
</feature>
<feature type="helix" evidence="15">
    <location>
        <begin position="521"/>
        <end position="523"/>
    </location>
</feature>
<feature type="strand" evidence="15">
    <location>
        <begin position="535"/>
        <end position="539"/>
    </location>
</feature>
<feature type="strand" evidence="15">
    <location>
        <begin position="541"/>
        <end position="544"/>
    </location>
</feature>
<feature type="strand" evidence="15">
    <location>
        <begin position="553"/>
        <end position="562"/>
    </location>
</feature>
<feature type="strand" evidence="15">
    <location>
        <begin position="569"/>
        <end position="576"/>
    </location>
</feature>
<feature type="strand" evidence="15">
    <location>
        <begin position="581"/>
        <end position="584"/>
    </location>
</feature>
<feature type="strand" evidence="15">
    <location>
        <begin position="601"/>
        <end position="608"/>
    </location>
</feature>
<feature type="strand" evidence="15">
    <location>
        <begin position="620"/>
        <end position="627"/>
    </location>
</feature>
<feature type="helix" evidence="15">
    <location>
        <begin position="629"/>
        <end position="635"/>
    </location>
</feature>
<feature type="turn" evidence="15">
    <location>
        <begin position="636"/>
        <end position="638"/>
    </location>
</feature>
<feature type="strand" evidence="15">
    <location>
        <begin position="644"/>
        <end position="647"/>
    </location>
</feature>
<feature type="strand" evidence="16">
    <location>
        <begin position="651"/>
        <end position="653"/>
    </location>
</feature>
<feature type="strand" evidence="15">
    <location>
        <begin position="664"/>
        <end position="669"/>
    </location>
</feature>
<feature type="strand" evidence="15">
    <location>
        <begin position="672"/>
        <end position="679"/>
    </location>
</feature>
<feature type="strand" evidence="15">
    <location>
        <begin position="683"/>
        <end position="686"/>
    </location>
</feature>
<feature type="strand" evidence="15">
    <location>
        <begin position="692"/>
        <end position="696"/>
    </location>
</feature>
<feature type="helix" evidence="15">
    <location>
        <begin position="697"/>
        <end position="699"/>
    </location>
</feature>
<feature type="helix" evidence="15">
    <location>
        <begin position="701"/>
        <end position="707"/>
    </location>
</feature>
<protein>
    <recommendedName>
        <fullName>Hepatocyte growth factor-like protein</fullName>
    </recommendedName>
    <alternativeName>
        <fullName>Macrophage stimulatory protein</fullName>
    </alternativeName>
    <alternativeName>
        <fullName>Macrophage-stimulating protein</fullName>
        <shortName>MSP</shortName>
    </alternativeName>
    <component>
        <recommendedName>
            <fullName>Hepatocyte growth factor-like protein alpha chain</fullName>
        </recommendedName>
    </component>
    <component>
        <recommendedName>
            <fullName>Hepatocyte growth factor-like protein beta chain</fullName>
        </recommendedName>
    </component>
</protein>
<gene>
    <name type="primary">MST1</name>
    <name type="synonym">D3F15S2</name>
    <name type="synonym">DNF15S2</name>
    <name type="synonym">HGFL</name>
</gene>
<organism>
    <name type="scientific">Homo sapiens</name>
    <name type="common">Human</name>
    <dbReference type="NCBI Taxonomy" id="9606"/>
    <lineage>
        <taxon>Eukaryota</taxon>
        <taxon>Metazoa</taxon>
        <taxon>Chordata</taxon>
        <taxon>Craniata</taxon>
        <taxon>Vertebrata</taxon>
        <taxon>Euteleostomi</taxon>
        <taxon>Mammalia</taxon>
        <taxon>Eutheria</taxon>
        <taxon>Euarchontoglires</taxon>
        <taxon>Primates</taxon>
        <taxon>Haplorrhini</taxon>
        <taxon>Catarrhini</taxon>
        <taxon>Hominidae</taxon>
        <taxon>Homo</taxon>
    </lineage>
</organism>
<reference key="1">
    <citation type="journal article" date="1991" name="Biochemistry">
        <title>Characterization of the DNF15S2 locus on human chromosome 3: identification of a gene coding for four kringle domains with homology to hepatocyte growth factor.</title>
        <authorList>
            <person name="Han S."/>
            <person name="Stuart L.A."/>
            <person name="Friezner Degen S.J."/>
        </authorList>
    </citation>
    <scope>NUCLEOTIDE SEQUENCE [MRNA]</scope>
    <scope>VARIANT TYR-13</scope>
    <source>
        <tissue>Liver</tissue>
    </source>
</reference>
<reference key="2">
    <citation type="journal article" date="1993" name="J. Biol. Chem.">
        <title>Cloning, sequencing, and expression of human macrophage stimulating protein (MSP, MST1) confirms MSP as a member of the family of kringle proteins and locates the MSP gene on chromosome 3.</title>
        <authorList>
            <person name="Yoshimura T."/>
            <person name="Yuhki N."/>
            <person name="Wang M.H."/>
            <person name="Skeel A."/>
            <person name="Leonard E.J."/>
        </authorList>
    </citation>
    <scope>NUCLEOTIDE SEQUENCE [MRNA]</scope>
    <source>
        <tissue>Liver</tissue>
    </source>
</reference>
<reference key="3">
    <citation type="journal article" date="2006" name="Nature">
        <title>The DNA sequence, annotation and analysis of human chromosome 3.</title>
        <authorList>
            <person name="Muzny D.M."/>
            <person name="Scherer S.E."/>
            <person name="Kaul R."/>
            <person name="Wang J."/>
            <person name="Yu J."/>
            <person name="Sudbrak R."/>
            <person name="Buhay C.J."/>
            <person name="Chen R."/>
            <person name="Cree A."/>
            <person name="Ding Y."/>
            <person name="Dugan-Rocha S."/>
            <person name="Gill R."/>
            <person name="Gunaratne P."/>
            <person name="Harris R.A."/>
            <person name="Hawes A.C."/>
            <person name="Hernandez J."/>
            <person name="Hodgson A.V."/>
            <person name="Hume J."/>
            <person name="Jackson A."/>
            <person name="Khan Z.M."/>
            <person name="Kovar-Smith C."/>
            <person name="Lewis L.R."/>
            <person name="Lozado R.J."/>
            <person name="Metzker M.L."/>
            <person name="Milosavljevic A."/>
            <person name="Miner G.R."/>
            <person name="Morgan M.B."/>
            <person name="Nazareth L.V."/>
            <person name="Scott G."/>
            <person name="Sodergren E."/>
            <person name="Song X.-Z."/>
            <person name="Steffen D."/>
            <person name="Wei S."/>
            <person name="Wheeler D.A."/>
            <person name="Wright M.W."/>
            <person name="Worley K.C."/>
            <person name="Yuan Y."/>
            <person name="Zhang Z."/>
            <person name="Adams C.Q."/>
            <person name="Ansari-Lari M.A."/>
            <person name="Ayele M."/>
            <person name="Brown M.J."/>
            <person name="Chen G."/>
            <person name="Chen Z."/>
            <person name="Clendenning J."/>
            <person name="Clerc-Blankenburg K.P."/>
            <person name="Chen R."/>
            <person name="Chen Z."/>
            <person name="Davis C."/>
            <person name="Delgado O."/>
            <person name="Dinh H.H."/>
            <person name="Dong W."/>
            <person name="Draper H."/>
            <person name="Ernst S."/>
            <person name="Fu G."/>
            <person name="Gonzalez-Garay M.L."/>
            <person name="Garcia D.K."/>
            <person name="Gillett W."/>
            <person name="Gu J."/>
            <person name="Hao B."/>
            <person name="Haugen E."/>
            <person name="Havlak P."/>
            <person name="He X."/>
            <person name="Hennig S."/>
            <person name="Hu S."/>
            <person name="Huang W."/>
            <person name="Jackson L.R."/>
            <person name="Jacob L.S."/>
            <person name="Kelly S.H."/>
            <person name="Kube M."/>
            <person name="Levy R."/>
            <person name="Li Z."/>
            <person name="Liu B."/>
            <person name="Liu J."/>
            <person name="Liu W."/>
            <person name="Lu J."/>
            <person name="Maheshwari M."/>
            <person name="Nguyen B.-V."/>
            <person name="Okwuonu G.O."/>
            <person name="Palmeiri A."/>
            <person name="Pasternak S."/>
            <person name="Perez L.M."/>
            <person name="Phelps K.A."/>
            <person name="Plopper F.J."/>
            <person name="Qiang B."/>
            <person name="Raymond C."/>
            <person name="Rodriguez R."/>
            <person name="Saenphimmachak C."/>
            <person name="Santibanez J."/>
            <person name="Shen H."/>
            <person name="Shen Y."/>
            <person name="Subramanian S."/>
            <person name="Tabor P.E."/>
            <person name="Verduzco D."/>
            <person name="Waldron L."/>
            <person name="Wang J."/>
            <person name="Wang J."/>
            <person name="Wang Q."/>
            <person name="Williams G.A."/>
            <person name="Wong G.K.-S."/>
            <person name="Yao Z."/>
            <person name="Zhang J."/>
            <person name="Zhang X."/>
            <person name="Zhao G."/>
            <person name="Zhou J."/>
            <person name="Zhou Y."/>
            <person name="Nelson D."/>
            <person name="Lehrach H."/>
            <person name="Reinhardt R."/>
            <person name="Naylor S.L."/>
            <person name="Yang H."/>
            <person name="Olson M."/>
            <person name="Weinstock G."/>
            <person name="Gibbs R.A."/>
        </authorList>
    </citation>
    <scope>NUCLEOTIDE SEQUENCE [LARGE SCALE GENOMIC DNA]</scope>
</reference>
<reference key="4">
    <citation type="journal article" date="2004" name="Genome Res.">
        <title>The status, quality, and expansion of the NIH full-length cDNA project: the Mammalian Gene Collection (MGC).</title>
        <authorList>
            <consortium name="The MGC Project Team"/>
        </authorList>
    </citation>
    <scope>NUCLEOTIDE SEQUENCE [LARGE SCALE MRNA]</scope>
</reference>
<reference key="5">
    <citation type="journal article" date="1991" name="J. Exp. Med.">
        <title>Macrophage stimulating protein: purification, partial amino acid sequence, and cellular activity.</title>
        <authorList>
            <person name="Skeel A."/>
            <person name="Yoshimura T."/>
            <person name="Showalter S.D."/>
            <person name="Tanaka S."/>
            <person name="Appella E."/>
            <person name="Leonard E.J."/>
        </authorList>
    </citation>
    <scope>PROTEIN SEQUENCE OF 230-247; 288-310; 326-341; 484-501; 530-552; 574-596 AND 602-611</scope>
    <scope>SUBUNIT</scope>
    <source>
        <tissue>Plasma</tissue>
    </source>
</reference>
<reference key="6">
    <citation type="journal article" date="1997" name="J. Biol. Chem.">
        <title>Macrophage stimulating protein (MSP) binds to its receptor via the MSP beta chain.</title>
        <authorList>
            <person name="Wang M.H."/>
            <person name="Julian F.M."/>
            <person name="Breathnach R."/>
            <person name="Godowski P.J."/>
            <person name="Takehara T."/>
            <person name="Yoshikawa W."/>
            <person name="Hagiya M."/>
            <person name="Leonard E.J."/>
        </authorList>
    </citation>
    <scope>INTERACTION WITH MST1R</scope>
</reference>
<reference key="7">
    <citation type="journal article" date="2005" name="J. Proteome Res.">
        <title>Human plasma N-glycoproteome analysis by immunoaffinity subtraction, hydrazide chemistry, and mass spectrometry.</title>
        <authorList>
            <person name="Liu T."/>
            <person name="Qian W.-J."/>
            <person name="Gritsenko M.A."/>
            <person name="Camp D.G. II"/>
            <person name="Monroe M.E."/>
            <person name="Moore R.J."/>
            <person name="Smith R.D."/>
        </authorList>
    </citation>
    <scope>GLYCOSYLATION [LARGE SCALE ANALYSIS] AT ASN-296</scope>
    <source>
        <tissue>Plasma</tissue>
    </source>
</reference>
<reference key="8">
    <citation type="journal article" date="2008" name="Mucosal Immunol.">
        <title>Gene-centric association mapping of chromosome 3p implicates MST1 in IBD pathogenesis.</title>
        <authorList>
            <person name="Goyette P."/>
            <person name="Lefebvre C."/>
            <person name="Ng A."/>
            <person name="Brant S.R."/>
            <person name="Cho J.H."/>
            <person name="Duerr R.H."/>
            <person name="Silverberg M.S."/>
            <person name="Taylor K.D."/>
            <person name="Latiano A."/>
            <person name="Aumais G."/>
            <person name="Deslandres C."/>
            <person name="Jobin G."/>
            <person name="Annese V."/>
            <person name="Daly M.J."/>
            <person name="Xavier R.J."/>
            <person name="Rioux J.D."/>
        </authorList>
    </citation>
    <scope>POSSIBLE INVOLVEMENT IN INFLAMMATORY BOWEL DISEASE</scope>
    <scope>VARIANT CYS-689</scope>
</reference>
<reference key="9">
    <citation type="journal article" date="2009" name="J. Proteome Res.">
        <title>Glycoproteomics analysis of human liver tissue by combination of multiple enzyme digestion and hydrazide chemistry.</title>
        <authorList>
            <person name="Chen R."/>
            <person name="Jiang X."/>
            <person name="Sun D."/>
            <person name="Han G."/>
            <person name="Wang F."/>
            <person name="Ye M."/>
            <person name="Wang L."/>
            <person name="Zou H."/>
        </authorList>
    </citation>
    <scope>GLYCOSYLATION [LARGE SCALE ANALYSIS] AT ASN-615</scope>
    <source>
        <tissue>Liver</tissue>
    </source>
</reference>
<reference key="10">
    <citation type="journal article" date="2010" name="Nat. Genet.">
        <title>Genome-wide association identifies multiple ulcerative colitis susceptibility loci.</title>
        <authorList>
            <person name="McGovern D.P."/>
            <person name="Gardet A."/>
            <person name="Torkvist L."/>
            <person name="Goyette P."/>
            <person name="Essers J."/>
            <person name="Taylor K.D."/>
            <person name="Neale B.M."/>
            <person name="Ong R.T."/>
            <person name="Lagace C."/>
            <person name="Li C."/>
            <person name="Green T."/>
            <person name="Stevens C.R."/>
            <person name="Beauchamp C."/>
            <person name="Fleshner P.R."/>
            <person name="Carlson M."/>
            <person name="D'Amato M."/>
            <person name="Halfvarson J."/>
            <person name="Hibberd M.L."/>
            <person name="Lordal M."/>
            <person name="Padyukov L."/>
            <person name="Andriulli A."/>
            <person name="Colombo E."/>
            <person name="Latiano A."/>
            <person name="Palmieri O."/>
            <person name="Bernard E.J."/>
            <person name="Deslandres C."/>
            <person name="Hommes D.W."/>
            <person name="de Jong D.J."/>
            <person name="Stokkers P.C."/>
            <person name="Weersma R.K."/>
            <person name="Sharma Y."/>
            <person name="Silverberg M.S."/>
            <person name="Cho J.H."/>
            <person name="Wu J."/>
            <person name="Roeder K."/>
            <person name="Brant S.R."/>
            <person name="Schumm L.P."/>
            <person name="Duerr R.H."/>
            <person name="Dubinsky M.C."/>
            <person name="Glazer N.L."/>
            <person name="Haritunians T."/>
            <person name="Ippoliti A."/>
            <person name="Melmed G.Y."/>
            <person name="Siscovick D.S."/>
            <person name="Vasiliauskas E.A."/>
            <person name="Targan S.R."/>
            <person name="Annese V."/>
            <person name="Wijmenga C."/>
            <person name="Pettersson S."/>
            <person name="Rotter J.I."/>
            <person name="Xavier R.J."/>
            <person name="Daly M.J."/>
            <person name="Rioux J.D."/>
            <person name="Seielstad M."/>
        </authorList>
    </citation>
    <scope>POSSIBLE INVOLVEMENT IN INFLAMMATORY BOWEL DISEASE</scope>
    <scope>VARIANT CYS-689</scope>
</reference>
<reference key="11">
    <citation type="journal article" date="2011" name="Mol. Cancer Res.">
        <title>Proteolytic activation of pro-macrophage-stimulating protein by hepsin.</title>
        <authorList>
            <person name="Ganesan R."/>
            <person name="Kolumam G.A."/>
            <person name="Lin S.J."/>
            <person name="Xie M.H."/>
            <person name="Santell L."/>
            <person name="Wu T.D."/>
            <person name="Lazarus R.A."/>
            <person name="Chaudhuri A."/>
            <person name="Kirchhofer D."/>
        </authorList>
    </citation>
    <scope>PROTEOLYTIC CLEAVAGE</scope>
</reference>
<reference key="12">
    <citation type="journal article" date="2011" name="PLoS ONE">
        <title>Protein characterization of a candidate mechanism SNP for Crohn's disease: the macrophage stimulating protein R689C substitution.</title>
        <authorList>
            <person name="Gorlatova N."/>
            <person name="Chao K."/>
            <person name="Pal L.R."/>
            <person name="Araj R.H."/>
            <person name="Galkin A."/>
            <person name="Turko I."/>
            <person name="Moult J."/>
            <person name="Herzberg O."/>
        </authorList>
    </citation>
    <scope>INTERACTION WITH MST1R</scope>
    <scope>CHARACTERIZATION OF VARIANT CYS-689</scope>
</reference>
<reference key="13">
    <citation type="journal article" date="2005" name="FEBS J.">
        <title>Crystal structure of the beta-chain of human hepatocyte growth factor-like/macrophage stimulating protein.</title>
        <authorList>
            <person name="Carafoli F."/>
            <person name="Chirgadze D.Y."/>
            <person name="Blundell T.L."/>
            <person name="Gherardi E."/>
        </authorList>
    </citation>
    <scope>X-RAY CRYSTALLOGRAPHY (1.85 ANGSTROMS) OF 465-711</scope>
    <scope>INTERCHAIN DISULFIDE BOND</scope>
</reference>
<keyword id="KW-0002">3D-structure</keyword>
<keyword id="KW-0903">Direct protein sequencing</keyword>
<keyword id="KW-1015">Disulfide bond</keyword>
<keyword id="KW-0325">Glycoprotein</keyword>
<keyword id="KW-0420">Kringle</keyword>
<keyword id="KW-1267">Proteomics identification</keyword>
<keyword id="KW-1185">Reference proteome</keyword>
<keyword id="KW-0677">Repeat</keyword>
<keyword id="KW-0964">Secreted</keyword>
<keyword id="KW-0721">Serine protease homolog</keyword>
<keyword id="KW-0732">Signal</keyword>
<name>HGFL_HUMAN</name>
<sequence>MGWLPLLLLLTQCLGVPGQRSPLNDFQVLRGTELQHLLHAVVPGPWQEDVADAEECAGRCGPLMDCRAFHYNVSSHGCQLLPWTQHSPHTRLRRSGRCDLFQKKDYVRTCIMNNGVGYRGTMATTVGGLPCQAWSHKFPNDHKYTPTLRNGLEENFCRNPDGDPGGPWCYTTDPAVRFQSCGIKSCREAACVWCNGEEYRGAVDRTESGRECQRWDLQHPHQHPFEPGKFLDQGLDDNYCRNPDGSERPWCYTTDPQIEREFCDLPRCGSEAQPRQEATTVSCFRGKGEGYRGTANTTTAGVPCQRWDAQIPHQHRFTPEKYACKDLRENFCRNPDGSEAPWCFTLRPGMRAAFCYQIRRCTDDVRPQDCYHGAGEQYRGTVSKTRKGVQCQRWSAETPHKPQFTFTSEPHAQLEENFCRNPDGDSHGPWCYTMDPRTPFDYCALRRCADDQPPSILDPPDQVQFEKCGKRVDRLDQRRSKLRVVGGHPGNSPWTVSLRNRQGQHFCGGSLVKEQWILTARQCFSSCHMPLTGYEVWLGTLFQNPQHGEPSLQRVPVAKMVCGPSGSQLVLLKLERSVTLNQRVALICLPPEWYVVPPGTKCEIAGWGETKGTGNDTVLNVALLNVISNQECNIKHRGRVRESEMCTEGLLAPVGACEGDYGGPLACFTHNCWVLEGIIIPNRVCARSRWPAVFTRVSVFVDWIHKVMRLG</sequence>
<evidence type="ECO:0000250" key="1"/>
<evidence type="ECO:0000255" key="2"/>
<evidence type="ECO:0000255" key="3">
    <source>
        <dbReference type="PROSITE-ProRule" id="PRU00121"/>
    </source>
</evidence>
<evidence type="ECO:0000255" key="4">
    <source>
        <dbReference type="PROSITE-ProRule" id="PRU00274"/>
    </source>
</evidence>
<evidence type="ECO:0000255" key="5">
    <source>
        <dbReference type="PROSITE-ProRule" id="PRU00315"/>
    </source>
</evidence>
<evidence type="ECO:0000269" key="6">
    <source>
    </source>
</evidence>
<evidence type="ECO:0000269" key="7">
    <source>
    </source>
</evidence>
<evidence type="ECO:0000269" key="8">
    <source>
    </source>
</evidence>
<evidence type="ECO:0000269" key="9">
    <source>
    </source>
</evidence>
<evidence type="ECO:0000269" key="10">
    <source>
    </source>
</evidence>
<evidence type="ECO:0000269" key="11">
    <source>
    </source>
</evidence>
<evidence type="ECO:0000269" key="12">
    <source>
    </source>
</evidence>
<evidence type="ECO:0000269" key="13">
    <source>
    </source>
</evidence>
<evidence type="ECO:0000305" key="14"/>
<evidence type="ECO:0007829" key="15">
    <source>
        <dbReference type="PDB" id="2ASU"/>
    </source>
</evidence>
<evidence type="ECO:0007829" key="16">
    <source>
        <dbReference type="PDB" id="4QT8"/>
    </source>
</evidence>
<dbReference type="EMBL" id="M74178">
    <property type="protein sequence ID" value="AAA50165.1"/>
    <property type="molecule type" value="mRNA"/>
</dbReference>
<dbReference type="EMBL" id="U37055">
    <property type="protein sequence ID" value="AAC50471.1"/>
    <property type="molecule type" value="Genomic_DNA"/>
</dbReference>
<dbReference type="EMBL" id="L11924">
    <property type="protein sequence ID" value="AAA59872.1"/>
    <property type="molecule type" value="mRNA"/>
</dbReference>
<dbReference type="EMBL" id="AC099668">
    <property type="status" value="NOT_ANNOTATED_CDS"/>
    <property type="molecule type" value="Genomic_DNA"/>
</dbReference>
<dbReference type="EMBL" id="BC048330">
    <property type="protein sequence ID" value="AAH48330.1"/>
    <property type="molecule type" value="mRNA"/>
</dbReference>
<dbReference type="PIR" id="A40331">
    <property type="entry name" value="A47136"/>
</dbReference>
<dbReference type="RefSeq" id="NP_066278.3">
    <property type="nucleotide sequence ID" value="NM_020998.3"/>
</dbReference>
<dbReference type="PDB" id="2ASU">
    <property type="method" value="X-ray"/>
    <property type="resolution" value="1.85 A"/>
    <property type="chains" value="A=465-483, B=484-711"/>
</dbReference>
<dbReference type="PDB" id="4QT8">
    <property type="method" value="X-ray"/>
    <property type="resolution" value="3.00 A"/>
    <property type="chains" value="C/D=465-711"/>
</dbReference>
<dbReference type="PDBsum" id="2ASU"/>
<dbReference type="PDBsum" id="4QT8"/>
<dbReference type="SMR" id="P26927"/>
<dbReference type="BioGRID" id="110591">
    <property type="interactions" value="17"/>
</dbReference>
<dbReference type="DIP" id="DIP-6028N"/>
<dbReference type="FunCoup" id="P26927">
    <property type="interactions" value="364"/>
</dbReference>
<dbReference type="IntAct" id="P26927">
    <property type="interactions" value="10"/>
</dbReference>
<dbReference type="MINT" id="P26927"/>
<dbReference type="STRING" id="9606.ENSP00000414287"/>
<dbReference type="BindingDB" id="P26927"/>
<dbReference type="ChEMBL" id="CHEMBL6042"/>
<dbReference type="MEROPS" id="S01.975"/>
<dbReference type="GlyConnect" id="1310">
    <property type="glycosylation" value="5 N-Linked glycans (5 sites)"/>
</dbReference>
<dbReference type="GlyCosmos" id="P26927">
    <property type="glycosylation" value="6 sites, 7 glycans"/>
</dbReference>
<dbReference type="GlyGen" id="P26927">
    <property type="glycosylation" value="7 sites, 19 N-linked glycans (5 sites), 2 O-linked glycans (2 sites)"/>
</dbReference>
<dbReference type="iPTMnet" id="P26927"/>
<dbReference type="PhosphoSitePlus" id="P26927"/>
<dbReference type="BioMuta" id="MST1"/>
<dbReference type="DMDM" id="147744563"/>
<dbReference type="CPTAC" id="non-CPTAC-2672"/>
<dbReference type="jPOST" id="P26927"/>
<dbReference type="MassIVE" id="P26927"/>
<dbReference type="PaxDb" id="9606-ENSP00000414287"/>
<dbReference type="PeptideAtlas" id="P26927"/>
<dbReference type="ProteomicsDB" id="54368"/>
<dbReference type="CPTC" id="P26927">
    <property type="antibodies" value="1 antibody"/>
</dbReference>
<dbReference type="DNASU" id="4485"/>
<dbReference type="GeneID" id="4485"/>
<dbReference type="KEGG" id="hsa:4485"/>
<dbReference type="AGR" id="HGNC:7380"/>
<dbReference type="CTD" id="4485"/>
<dbReference type="DisGeNET" id="4485"/>
<dbReference type="GeneCards" id="MST1"/>
<dbReference type="HGNC" id="HGNC:7380">
    <property type="gene designation" value="MST1"/>
</dbReference>
<dbReference type="MalaCards" id="MST1"/>
<dbReference type="MIM" id="142408">
    <property type="type" value="gene"/>
</dbReference>
<dbReference type="neXtProt" id="NX_P26927"/>
<dbReference type="Orphanet" id="171">
    <property type="disease" value="Primary sclerosing cholangitis"/>
</dbReference>
<dbReference type="PharmGKB" id="PA31185"/>
<dbReference type="eggNOG" id="ENOG502QRJ0">
    <property type="taxonomic scope" value="Eukaryota"/>
</dbReference>
<dbReference type="InParanoid" id="P26927"/>
<dbReference type="OrthoDB" id="41905at2759"/>
<dbReference type="PAN-GO" id="P26927">
    <property type="GO annotations" value="3 GO annotations based on evolutionary models"/>
</dbReference>
<dbReference type="PhylomeDB" id="P26927"/>
<dbReference type="PathwayCommons" id="P26927"/>
<dbReference type="Reactome" id="R-HSA-8852405">
    <property type="pathway name" value="Signaling by MST1"/>
</dbReference>
<dbReference type="SignaLink" id="P26927"/>
<dbReference type="SIGNOR" id="P26927"/>
<dbReference type="BioGRID-ORCS" id="4485">
    <property type="hits" value="323 hits in 1111 CRISPR screens"/>
</dbReference>
<dbReference type="ChiTaRS" id="MST1">
    <property type="organism name" value="human"/>
</dbReference>
<dbReference type="EvolutionaryTrace" id="P26927"/>
<dbReference type="GeneWiki" id="MST1"/>
<dbReference type="GenomeRNAi" id="4485"/>
<dbReference type="Pharos" id="P26927">
    <property type="development level" value="Tchem"/>
</dbReference>
<dbReference type="PRO" id="PR:P26927"/>
<dbReference type="Proteomes" id="UP000005640">
    <property type="component" value="Unplaced"/>
</dbReference>
<dbReference type="RNAct" id="P26927">
    <property type="molecule type" value="protein"/>
</dbReference>
<dbReference type="GO" id="GO:0062023">
    <property type="term" value="C:collagen-containing extracellular matrix"/>
    <property type="evidence" value="ECO:0007005"/>
    <property type="project" value="BHF-UCL"/>
</dbReference>
<dbReference type="GO" id="GO:0005576">
    <property type="term" value="C:extracellular region"/>
    <property type="evidence" value="ECO:0000304"/>
    <property type="project" value="Reactome"/>
</dbReference>
<dbReference type="GO" id="GO:0005615">
    <property type="term" value="C:extracellular space"/>
    <property type="evidence" value="ECO:0000314"/>
    <property type="project" value="UniProtKB"/>
</dbReference>
<dbReference type="GO" id="GO:0030971">
    <property type="term" value="F:receptor tyrosine kinase binding"/>
    <property type="evidence" value="ECO:0000314"/>
    <property type="project" value="UniProtKB"/>
</dbReference>
<dbReference type="GO" id="GO:0045721">
    <property type="term" value="P:negative regulation of gluconeogenesis"/>
    <property type="evidence" value="ECO:0000314"/>
    <property type="project" value="UniProtKB"/>
</dbReference>
<dbReference type="GO" id="GO:0006508">
    <property type="term" value="P:proteolysis"/>
    <property type="evidence" value="ECO:0007669"/>
    <property type="project" value="InterPro"/>
</dbReference>
<dbReference type="GO" id="GO:2000479">
    <property type="term" value="P:regulation of cAMP-dependent protein kinase activity"/>
    <property type="evidence" value="ECO:0000314"/>
    <property type="project" value="UniProtKB"/>
</dbReference>
<dbReference type="GO" id="GO:0046425">
    <property type="term" value="P:regulation of receptor signaling pathway via JAK-STAT"/>
    <property type="evidence" value="ECO:0000318"/>
    <property type="project" value="GO_Central"/>
</dbReference>
<dbReference type="CDD" id="cd00108">
    <property type="entry name" value="KR"/>
    <property type="match status" value="4"/>
</dbReference>
<dbReference type="CDD" id="cd01099">
    <property type="entry name" value="PAN_AP_HGF"/>
    <property type="match status" value="1"/>
</dbReference>
<dbReference type="CDD" id="cd00190">
    <property type="entry name" value="Tryp_SPc"/>
    <property type="match status" value="1"/>
</dbReference>
<dbReference type="FunFam" id="2.40.20.10:FF:000002">
    <property type="entry name" value="Hepatocyte growth factor"/>
    <property type="match status" value="2"/>
</dbReference>
<dbReference type="FunFam" id="2.40.20.10:FF:000004">
    <property type="entry name" value="Hepatocyte growth factor"/>
    <property type="match status" value="1"/>
</dbReference>
<dbReference type="FunFam" id="2.40.10.10:FF:000055">
    <property type="entry name" value="Hepatocyte growth factor-like 1"/>
    <property type="match status" value="1"/>
</dbReference>
<dbReference type="FunFam" id="2.40.20.10:FF:000009">
    <property type="entry name" value="Hepatocyte growth factor-like 1"/>
    <property type="match status" value="1"/>
</dbReference>
<dbReference type="FunFam" id="3.50.4.10:FF:000004">
    <property type="entry name" value="Hepatocyte growth factor-like 1"/>
    <property type="match status" value="1"/>
</dbReference>
<dbReference type="FunFam" id="2.40.10.10:FF:000064">
    <property type="entry name" value="Hepatocyte growth factor-like protein"/>
    <property type="match status" value="1"/>
</dbReference>
<dbReference type="Gene3D" id="3.50.4.10">
    <property type="entry name" value="Hepatocyte Growth Factor"/>
    <property type="match status" value="1"/>
</dbReference>
<dbReference type="Gene3D" id="2.40.20.10">
    <property type="entry name" value="Plasminogen Kringle 4"/>
    <property type="match status" value="4"/>
</dbReference>
<dbReference type="Gene3D" id="2.40.10.10">
    <property type="entry name" value="Trypsin-like serine proteases"/>
    <property type="match status" value="2"/>
</dbReference>
<dbReference type="InterPro" id="IPR024174">
    <property type="entry name" value="HGF/MST1"/>
</dbReference>
<dbReference type="InterPro" id="IPR000001">
    <property type="entry name" value="Kringle"/>
</dbReference>
<dbReference type="InterPro" id="IPR013806">
    <property type="entry name" value="Kringle-like"/>
</dbReference>
<dbReference type="InterPro" id="IPR018056">
    <property type="entry name" value="Kringle_CS"/>
</dbReference>
<dbReference type="InterPro" id="IPR038178">
    <property type="entry name" value="Kringle_sf"/>
</dbReference>
<dbReference type="InterPro" id="IPR043575">
    <property type="entry name" value="MSP_HGFL"/>
</dbReference>
<dbReference type="InterPro" id="IPR003609">
    <property type="entry name" value="Pan_app"/>
</dbReference>
<dbReference type="InterPro" id="IPR009003">
    <property type="entry name" value="Peptidase_S1_PA"/>
</dbReference>
<dbReference type="InterPro" id="IPR043504">
    <property type="entry name" value="Peptidase_S1_PA_chymotrypsin"/>
</dbReference>
<dbReference type="InterPro" id="IPR001314">
    <property type="entry name" value="Peptidase_S1A"/>
</dbReference>
<dbReference type="InterPro" id="IPR050759">
    <property type="entry name" value="Serine_protease_kringle"/>
</dbReference>
<dbReference type="InterPro" id="IPR001254">
    <property type="entry name" value="Trypsin_dom"/>
</dbReference>
<dbReference type="PANTHER" id="PTHR24261:SF7">
    <property type="entry name" value="KRINGLE DOMAIN-CONTAINING PROTEIN"/>
    <property type="match status" value="1"/>
</dbReference>
<dbReference type="PANTHER" id="PTHR24261">
    <property type="entry name" value="PLASMINOGEN-RELATED"/>
    <property type="match status" value="1"/>
</dbReference>
<dbReference type="Pfam" id="PF00051">
    <property type="entry name" value="Kringle"/>
    <property type="match status" value="4"/>
</dbReference>
<dbReference type="Pfam" id="PF00024">
    <property type="entry name" value="PAN_1"/>
    <property type="match status" value="1"/>
</dbReference>
<dbReference type="Pfam" id="PF00089">
    <property type="entry name" value="Trypsin"/>
    <property type="match status" value="1"/>
</dbReference>
<dbReference type="PIRSF" id="PIRSF001152">
    <property type="entry name" value="HGF_MST1"/>
    <property type="match status" value="1"/>
</dbReference>
<dbReference type="PIRSF" id="PIRSF500185">
    <property type="entry name" value="MSP_HGFL"/>
    <property type="match status" value="1"/>
</dbReference>
<dbReference type="PRINTS" id="PR00722">
    <property type="entry name" value="CHYMOTRYPSIN"/>
</dbReference>
<dbReference type="PRINTS" id="PR00018">
    <property type="entry name" value="KRINGLE"/>
</dbReference>
<dbReference type="SMART" id="SM00130">
    <property type="entry name" value="KR"/>
    <property type="match status" value="4"/>
</dbReference>
<dbReference type="SMART" id="SM00473">
    <property type="entry name" value="PAN_AP"/>
    <property type="match status" value="1"/>
</dbReference>
<dbReference type="SMART" id="SM00020">
    <property type="entry name" value="Tryp_SPc"/>
    <property type="match status" value="1"/>
</dbReference>
<dbReference type="SUPFAM" id="SSF57414">
    <property type="entry name" value="Hairpin loop containing domain-like"/>
    <property type="match status" value="1"/>
</dbReference>
<dbReference type="SUPFAM" id="SSF57440">
    <property type="entry name" value="Kringle-like"/>
    <property type="match status" value="4"/>
</dbReference>
<dbReference type="SUPFAM" id="SSF50494">
    <property type="entry name" value="Trypsin-like serine proteases"/>
    <property type="match status" value="1"/>
</dbReference>
<dbReference type="PROSITE" id="PS00021">
    <property type="entry name" value="KRINGLE_1"/>
    <property type="match status" value="4"/>
</dbReference>
<dbReference type="PROSITE" id="PS50070">
    <property type="entry name" value="KRINGLE_2"/>
    <property type="match status" value="4"/>
</dbReference>
<dbReference type="PROSITE" id="PS50948">
    <property type="entry name" value="PAN"/>
    <property type="match status" value="1"/>
</dbReference>
<dbReference type="PROSITE" id="PS50240">
    <property type="entry name" value="TRYPSIN_DOM"/>
    <property type="match status" value="1"/>
</dbReference>